<feature type="chain" id="PRO_1000077977" description="Probable manganese-dependent inorganic pyrophosphatase">
    <location>
        <begin position="1"/>
        <end position="309"/>
    </location>
</feature>
<feature type="binding site" evidence="1">
    <location>
        <position position="9"/>
    </location>
    <ligand>
        <name>Mn(2+)</name>
        <dbReference type="ChEBI" id="CHEBI:29035"/>
        <label>1</label>
    </ligand>
</feature>
<feature type="binding site" evidence="1">
    <location>
        <position position="13"/>
    </location>
    <ligand>
        <name>Mn(2+)</name>
        <dbReference type="ChEBI" id="CHEBI:29035"/>
        <label>1</label>
    </ligand>
</feature>
<feature type="binding site" evidence="1">
    <location>
        <position position="15"/>
    </location>
    <ligand>
        <name>Mn(2+)</name>
        <dbReference type="ChEBI" id="CHEBI:29035"/>
        <label>2</label>
    </ligand>
</feature>
<feature type="binding site" evidence="1">
    <location>
        <position position="75"/>
    </location>
    <ligand>
        <name>Mn(2+)</name>
        <dbReference type="ChEBI" id="CHEBI:29035"/>
        <label>1</label>
    </ligand>
</feature>
<feature type="binding site" evidence="1">
    <location>
        <position position="75"/>
    </location>
    <ligand>
        <name>Mn(2+)</name>
        <dbReference type="ChEBI" id="CHEBI:29035"/>
        <label>2</label>
    </ligand>
</feature>
<feature type="binding site" evidence="1">
    <location>
        <position position="97"/>
    </location>
    <ligand>
        <name>Mn(2+)</name>
        <dbReference type="ChEBI" id="CHEBI:29035"/>
        <label>2</label>
    </ligand>
</feature>
<feature type="binding site" evidence="1">
    <location>
        <position position="149"/>
    </location>
    <ligand>
        <name>Mn(2+)</name>
        <dbReference type="ChEBI" id="CHEBI:29035"/>
        <label>2</label>
    </ligand>
</feature>
<keyword id="KW-0963">Cytoplasm</keyword>
<keyword id="KW-0378">Hydrolase</keyword>
<keyword id="KW-0464">Manganese</keyword>
<keyword id="KW-0479">Metal-binding</keyword>
<organism>
    <name type="scientific">Staphylococcus aureus (strain JH9)</name>
    <dbReference type="NCBI Taxonomy" id="359786"/>
    <lineage>
        <taxon>Bacteria</taxon>
        <taxon>Bacillati</taxon>
        <taxon>Bacillota</taxon>
        <taxon>Bacilli</taxon>
        <taxon>Bacillales</taxon>
        <taxon>Staphylococcaceae</taxon>
        <taxon>Staphylococcus</taxon>
    </lineage>
</organism>
<reference key="1">
    <citation type="submission" date="2007-05" db="EMBL/GenBank/DDBJ databases">
        <title>Complete sequence of chromosome of Staphylococcus aureus subsp. aureus JH9.</title>
        <authorList>
            <consortium name="US DOE Joint Genome Institute"/>
            <person name="Copeland A."/>
            <person name="Lucas S."/>
            <person name="Lapidus A."/>
            <person name="Barry K."/>
            <person name="Detter J.C."/>
            <person name="Glavina del Rio T."/>
            <person name="Hammon N."/>
            <person name="Israni S."/>
            <person name="Pitluck S."/>
            <person name="Chain P."/>
            <person name="Malfatti S."/>
            <person name="Shin M."/>
            <person name="Vergez L."/>
            <person name="Schmutz J."/>
            <person name="Larimer F."/>
            <person name="Land M."/>
            <person name="Hauser L."/>
            <person name="Kyrpides N."/>
            <person name="Kim E."/>
            <person name="Tomasz A."/>
            <person name="Richardson P."/>
        </authorList>
    </citation>
    <scope>NUCLEOTIDE SEQUENCE [LARGE SCALE GENOMIC DNA]</scope>
    <source>
        <strain>JH9</strain>
    </source>
</reference>
<evidence type="ECO:0000255" key="1">
    <source>
        <dbReference type="HAMAP-Rule" id="MF_00207"/>
    </source>
</evidence>
<dbReference type="EC" id="3.6.1.1" evidence="1"/>
<dbReference type="EMBL" id="CP000703">
    <property type="protein sequence ID" value="ABQ49760.1"/>
    <property type="molecule type" value="Genomic_DNA"/>
</dbReference>
<dbReference type="RefSeq" id="WP_001140871.1">
    <property type="nucleotide sequence ID" value="NC_009487.1"/>
</dbReference>
<dbReference type="SMR" id="A5IU87"/>
<dbReference type="KEGG" id="saj:SaurJH9_1975"/>
<dbReference type="HOGENOM" id="CLU_025243_0_1_9"/>
<dbReference type="GO" id="GO:0005737">
    <property type="term" value="C:cytoplasm"/>
    <property type="evidence" value="ECO:0007669"/>
    <property type="project" value="UniProtKB-SubCell"/>
</dbReference>
<dbReference type="GO" id="GO:0004427">
    <property type="term" value="F:inorganic diphosphate phosphatase activity"/>
    <property type="evidence" value="ECO:0007669"/>
    <property type="project" value="UniProtKB-UniRule"/>
</dbReference>
<dbReference type="GO" id="GO:0030145">
    <property type="term" value="F:manganese ion binding"/>
    <property type="evidence" value="ECO:0007669"/>
    <property type="project" value="UniProtKB-UniRule"/>
</dbReference>
<dbReference type="FunFam" id="3.10.310.20:FF:000001">
    <property type="entry name" value="Probable manganese-dependent inorganic pyrophosphatase"/>
    <property type="match status" value="1"/>
</dbReference>
<dbReference type="FunFam" id="3.90.1640.10:FF:000001">
    <property type="entry name" value="Probable manganese-dependent inorganic pyrophosphatase"/>
    <property type="match status" value="1"/>
</dbReference>
<dbReference type="Gene3D" id="3.10.310.20">
    <property type="entry name" value="DHHA2 domain"/>
    <property type="match status" value="1"/>
</dbReference>
<dbReference type="Gene3D" id="3.90.1640.10">
    <property type="entry name" value="inorganic pyrophosphatase (n-terminal core)"/>
    <property type="match status" value="1"/>
</dbReference>
<dbReference type="HAMAP" id="MF_00207">
    <property type="entry name" value="PPase_C"/>
    <property type="match status" value="1"/>
</dbReference>
<dbReference type="InterPro" id="IPR001667">
    <property type="entry name" value="DDH_dom"/>
</dbReference>
<dbReference type="InterPro" id="IPR038763">
    <property type="entry name" value="DHH_sf"/>
</dbReference>
<dbReference type="InterPro" id="IPR004097">
    <property type="entry name" value="DHHA2"/>
</dbReference>
<dbReference type="InterPro" id="IPR038222">
    <property type="entry name" value="DHHA2_dom_sf"/>
</dbReference>
<dbReference type="InterPro" id="IPR022934">
    <property type="entry name" value="Mn-dep_inorganic_PyrPase"/>
</dbReference>
<dbReference type="NCBIfam" id="NF003877">
    <property type="entry name" value="PRK05427.1"/>
    <property type="match status" value="1"/>
</dbReference>
<dbReference type="PANTHER" id="PTHR12112">
    <property type="entry name" value="BNIP - RELATED"/>
    <property type="match status" value="1"/>
</dbReference>
<dbReference type="PANTHER" id="PTHR12112:SF22">
    <property type="entry name" value="MANGANESE-DEPENDENT INORGANIC PYROPHOSPHATASE-RELATED"/>
    <property type="match status" value="1"/>
</dbReference>
<dbReference type="Pfam" id="PF01368">
    <property type="entry name" value="DHH"/>
    <property type="match status" value="1"/>
</dbReference>
<dbReference type="Pfam" id="PF02833">
    <property type="entry name" value="DHHA2"/>
    <property type="match status" value="1"/>
</dbReference>
<dbReference type="SMART" id="SM01131">
    <property type="entry name" value="DHHA2"/>
    <property type="match status" value="1"/>
</dbReference>
<dbReference type="SUPFAM" id="SSF64182">
    <property type="entry name" value="DHH phosphoesterases"/>
    <property type="match status" value="1"/>
</dbReference>
<sequence length="309" mass="34069">MAKTYIFGHKNPDTDAISSAIIMAEFEQLRGNSGAKAYRLGDVSAETQFALDTFNVPAPELLTDDLDGQDVILVDHNEFQQSSDTIASATIKHVIDHHRIANFETAGPLCYRAEPVGCTATILYKMFRERGFEIKPEIAGLMLSAIISDSLLFKSPTCTQQDVKAAEELKDIAKVDIQKYGLDMLKAGASTTDKSVEFLLNMDAKSFTMGDYVTRIAQVNAVDLDEVLNRKEDLEKEMLAVSAQEKYDLFVLVVTDIINSDSKILVVGAEKDKVGEAFNVQLEDDMAFLSGVVSRKKQIVPQITEALTK</sequence>
<proteinExistence type="inferred from homology"/>
<protein>
    <recommendedName>
        <fullName evidence="1">Probable manganese-dependent inorganic pyrophosphatase</fullName>
        <ecNumber evidence="1">3.6.1.1</ecNumber>
    </recommendedName>
    <alternativeName>
        <fullName evidence="1">Pyrophosphate phospho-hydrolase</fullName>
        <shortName evidence="1">PPase</shortName>
    </alternativeName>
</protein>
<gene>
    <name evidence="1" type="primary">ppaC</name>
    <name type="ordered locus">SaurJH9_1975</name>
</gene>
<accession>A5IU87</accession>
<name>PPAC_STAA9</name>
<comment type="catalytic activity">
    <reaction evidence="1">
        <text>diphosphate + H2O = 2 phosphate + H(+)</text>
        <dbReference type="Rhea" id="RHEA:24576"/>
        <dbReference type="ChEBI" id="CHEBI:15377"/>
        <dbReference type="ChEBI" id="CHEBI:15378"/>
        <dbReference type="ChEBI" id="CHEBI:33019"/>
        <dbReference type="ChEBI" id="CHEBI:43474"/>
        <dbReference type="EC" id="3.6.1.1"/>
    </reaction>
</comment>
<comment type="cofactor">
    <cofactor evidence="1">
        <name>Mn(2+)</name>
        <dbReference type="ChEBI" id="CHEBI:29035"/>
    </cofactor>
    <text evidence="1">Binds 2 manganese ions per subunit.</text>
</comment>
<comment type="subcellular location">
    <subcellularLocation>
        <location evidence="1">Cytoplasm</location>
    </subcellularLocation>
</comment>
<comment type="similarity">
    <text evidence="1">Belongs to the PPase class C family.</text>
</comment>